<accession>B9M357</accession>
<name>DNAK_GEODF</name>
<comment type="function">
    <text evidence="1">Acts as a chaperone.</text>
</comment>
<comment type="induction">
    <text evidence="1">By stress conditions e.g. heat shock.</text>
</comment>
<comment type="similarity">
    <text evidence="1">Belongs to the heat shock protein 70 family.</text>
</comment>
<feature type="chain" id="PRO_1000133145" description="Chaperone protein DnaK">
    <location>
        <begin position="1"/>
        <end position="636"/>
    </location>
</feature>
<feature type="region of interest" description="Disordered" evidence="2">
    <location>
        <begin position="602"/>
        <end position="636"/>
    </location>
</feature>
<feature type="compositionally biased region" description="Low complexity" evidence="2">
    <location>
        <begin position="602"/>
        <end position="613"/>
    </location>
</feature>
<feature type="compositionally biased region" description="Basic and acidic residues" evidence="2">
    <location>
        <begin position="614"/>
        <end position="625"/>
    </location>
</feature>
<feature type="compositionally biased region" description="Acidic residues" evidence="2">
    <location>
        <begin position="626"/>
        <end position="636"/>
    </location>
</feature>
<feature type="modified residue" description="Phosphothreonine; by autocatalysis" evidence="1">
    <location>
        <position position="198"/>
    </location>
</feature>
<evidence type="ECO:0000255" key="1">
    <source>
        <dbReference type="HAMAP-Rule" id="MF_00332"/>
    </source>
</evidence>
<evidence type="ECO:0000256" key="2">
    <source>
        <dbReference type="SAM" id="MobiDB-lite"/>
    </source>
</evidence>
<keyword id="KW-0067">ATP-binding</keyword>
<keyword id="KW-0143">Chaperone</keyword>
<keyword id="KW-0547">Nucleotide-binding</keyword>
<keyword id="KW-0597">Phosphoprotein</keyword>
<keyword id="KW-1185">Reference proteome</keyword>
<keyword id="KW-0346">Stress response</keyword>
<organism>
    <name type="scientific">Geotalea daltonii (strain DSM 22248 / JCM 15807 / FRC-32)</name>
    <name type="common">Geobacter daltonii</name>
    <dbReference type="NCBI Taxonomy" id="316067"/>
    <lineage>
        <taxon>Bacteria</taxon>
        <taxon>Pseudomonadati</taxon>
        <taxon>Thermodesulfobacteriota</taxon>
        <taxon>Desulfuromonadia</taxon>
        <taxon>Geobacterales</taxon>
        <taxon>Geobacteraceae</taxon>
        <taxon>Geotalea</taxon>
    </lineage>
</organism>
<dbReference type="EMBL" id="CP001390">
    <property type="protein sequence ID" value="ACM19467.1"/>
    <property type="molecule type" value="Genomic_DNA"/>
</dbReference>
<dbReference type="RefSeq" id="WP_012646196.1">
    <property type="nucleotide sequence ID" value="NC_011979.1"/>
</dbReference>
<dbReference type="SMR" id="B9M357"/>
<dbReference type="STRING" id="316067.Geob_1107"/>
<dbReference type="KEGG" id="geo:Geob_1107"/>
<dbReference type="eggNOG" id="COG0443">
    <property type="taxonomic scope" value="Bacteria"/>
</dbReference>
<dbReference type="HOGENOM" id="CLU_005965_2_1_7"/>
<dbReference type="OrthoDB" id="9766019at2"/>
<dbReference type="Proteomes" id="UP000007721">
    <property type="component" value="Chromosome"/>
</dbReference>
<dbReference type="GO" id="GO:0005524">
    <property type="term" value="F:ATP binding"/>
    <property type="evidence" value="ECO:0007669"/>
    <property type="project" value="UniProtKB-UniRule"/>
</dbReference>
<dbReference type="GO" id="GO:0140662">
    <property type="term" value="F:ATP-dependent protein folding chaperone"/>
    <property type="evidence" value="ECO:0007669"/>
    <property type="project" value="InterPro"/>
</dbReference>
<dbReference type="GO" id="GO:0051082">
    <property type="term" value="F:unfolded protein binding"/>
    <property type="evidence" value="ECO:0007669"/>
    <property type="project" value="InterPro"/>
</dbReference>
<dbReference type="CDD" id="cd10234">
    <property type="entry name" value="ASKHA_NBD_HSP70_DnaK-like"/>
    <property type="match status" value="1"/>
</dbReference>
<dbReference type="FunFam" id="2.60.34.10:FF:000014">
    <property type="entry name" value="Chaperone protein DnaK HSP70"/>
    <property type="match status" value="1"/>
</dbReference>
<dbReference type="FunFam" id="3.30.420.40:FF:000020">
    <property type="entry name" value="Chaperone protein HscA homolog"/>
    <property type="match status" value="1"/>
</dbReference>
<dbReference type="FunFam" id="3.30.30.30:FF:000003">
    <property type="entry name" value="Heat shock protein 9"/>
    <property type="match status" value="1"/>
</dbReference>
<dbReference type="FunFam" id="1.20.1270.10:FF:000001">
    <property type="entry name" value="Molecular chaperone DnaK"/>
    <property type="match status" value="1"/>
</dbReference>
<dbReference type="FunFam" id="3.30.420.40:FF:000004">
    <property type="entry name" value="Molecular chaperone DnaK"/>
    <property type="match status" value="1"/>
</dbReference>
<dbReference type="FunFam" id="3.90.640.10:FF:000003">
    <property type="entry name" value="Molecular chaperone DnaK"/>
    <property type="match status" value="1"/>
</dbReference>
<dbReference type="Gene3D" id="1.20.1270.10">
    <property type="match status" value="1"/>
</dbReference>
<dbReference type="Gene3D" id="3.30.420.40">
    <property type="match status" value="2"/>
</dbReference>
<dbReference type="Gene3D" id="3.90.640.10">
    <property type="entry name" value="Actin, Chain A, domain 4"/>
    <property type="match status" value="1"/>
</dbReference>
<dbReference type="Gene3D" id="2.60.34.10">
    <property type="entry name" value="Substrate Binding Domain Of DNAk, Chain A, domain 1"/>
    <property type="match status" value="1"/>
</dbReference>
<dbReference type="HAMAP" id="MF_00332">
    <property type="entry name" value="DnaK"/>
    <property type="match status" value="1"/>
</dbReference>
<dbReference type="InterPro" id="IPR043129">
    <property type="entry name" value="ATPase_NBD"/>
</dbReference>
<dbReference type="InterPro" id="IPR012725">
    <property type="entry name" value="Chaperone_DnaK"/>
</dbReference>
<dbReference type="InterPro" id="IPR018181">
    <property type="entry name" value="Heat_shock_70_CS"/>
</dbReference>
<dbReference type="InterPro" id="IPR029048">
    <property type="entry name" value="HSP70_C_sf"/>
</dbReference>
<dbReference type="InterPro" id="IPR029047">
    <property type="entry name" value="HSP70_peptide-bd_sf"/>
</dbReference>
<dbReference type="InterPro" id="IPR013126">
    <property type="entry name" value="Hsp_70_fam"/>
</dbReference>
<dbReference type="NCBIfam" id="NF001413">
    <property type="entry name" value="PRK00290.1"/>
    <property type="match status" value="1"/>
</dbReference>
<dbReference type="NCBIfam" id="NF003520">
    <property type="entry name" value="PRK05183.1"/>
    <property type="match status" value="1"/>
</dbReference>
<dbReference type="NCBIfam" id="TIGR02350">
    <property type="entry name" value="prok_dnaK"/>
    <property type="match status" value="1"/>
</dbReference>
<dbReference type="PANTHER" id="PTHR19375">
    <property type="entry name" value="HEAT SHOCK PROTEIN 70KDA"/>
    <property type="match status" value="1"/>
</dbReference>
<dbReference type="Pfam" id="PF00012">
    <property type="entry name" value="HSP70"/>
    <property type="match status" value="1"/>
</dbReference>
<dbReference type="PRINTS" id="PR00301">
    <property type="entry name" value="HEATSHOCK70"/>
</dbReference>
<dbReference type="SUPFAM" id="SSF53067">
    <property type="entry name" value="Actin-like ATPase domain"/>
    <property type="match status" value="2"/>
</dbReference>
<dbReference type="SUPFAM" id="SSF100934">
    <property type="entry name" value="Heat shock protein 70kD (HSP70), C-terminal subdomain"/>
    <property type="match status" value="1"/>
</dbReference>
<dbReference type="SUPFAM" id="SSF100920">
    <property type="entry name" value="Heat shock protein 70kD (HSP70), peptide-binding domain"/>
    <property type="match status" value="1"/>
</dbReference>
<dbReference type="PROSITE" id="PS00297">
    <property type="entry name" value="HSP70_1"/>
    <property type="match status" value="1"/>
</dbReference>
<dbReference type="PROSITE" id="PS00329">
    <property type="entry name" value="HSP70_2"/>
    <property type="match status" value="1"/>
</dbReference>
<dbReference type="PROSITE" id="PS01036">
    <property type="entry name" value="HSP70_3"/>
    <property type="match status" value="1"/>
</dbReference>
<gene>
    <name evidence="1" type="primary">dnaK</name>
    <name type="ordered locus">Geob_1107</name>
</gene>
<proteinExistence type="inferred from homology"/>
<reference key="1">
    <citation type="submission" date="2009-01" db="EMBL/GenBank/DDBJ databases">
        <title>Complete sequence of Geobacter sp. FRC-32.</title>
        <authorList>
            <consortium name="US DOE Joint Genome Institute"/>
            <person name="Lucas S."/>
            <person name="Copeland A."/>
            <person name="Lapidus A."/>
            <person name="Glavina del Rio T."/>
            <person name="Dalin E."/>
            <person name="Tice H."/>
            <person name="Bruce D."/>
            <person name="Goodwin L."/>
            <person name="Pitluck S."/>
            <person name="Saunders E."/>
            <person name="Brettin T."/>
            <person name="Detter J.C."/>
            <person name="Han C."/>
            <person name="Larimer F."/>
            <person name="Land M."/>
            <person name="Hauser L."/>
            <person name="Kyrpides N."/>
            <person name="Ovchinnikova G."/>
            <person name="Kostka J."/>
            <person name="Richardson P."/>
        </authorList>
    </citation>
    <scope>NUCLEOTIDE SEQUENCE [LARGE SCALE GENOMIC DNA]</scope>
    <source>
        <strain>DSM 22248 / JCM 15807 / FRC-32</strain>
    </source>
</reference>
<sequence length="636" mass="68345">MSKVIGIDLGTTNSCVAIMEGGEPIVIANAEGSRTTPSMVAITDSGERLVGQQAKRQAVTNPENTLFAIKRLIGRKFESEAVKKDIAISPFKIVKADNADAWVEVRGQKYSPPEISAMVLQKMKKTAEDYLGETVTDAVITVPAYFDDSQRQATKDAGKIAGLNVLRIINEPTAAALAYGLDKKKDEKIAVFDLGGGTFDISILELGEGVFEVKSTNGDTFLGGEDFDQNVIDWIADEFKKDQGIDLRNDKMALQRLKEAAEKAKCELSSSMETDINLPFITADASGPKHLNLKLTRAKLEAICANLIDKLEGPCRTALKDAGLSPSDIDEVILVGGMTRMPIVQKRVQDIFGKVPNRGVNPDEVVAIGAAIQGGVLKGDVKDVLLLDVTPLSLGIETLGGVMTRLIEKNSTIPCRKSQIFSTAADNQPAVSIHVLQGEREMAGDNKTLGNFELTGIPAAPRGVPQIEVTFDIDANGIVHVSAKDLGTGKEQSIRITASSGLSKEEIDKMVREAESHASEDKKKRELIEARNQADSLVYSTEKSLSEFGDKIDAAEKQKIEEGLAALKKAMEGNDADAIKKASDELMQASHKLAEAVYAKAQPAGEEQAGAAAHEGEAKGEKVVDADFEEVKEDKK</sequence>
<protein>
    <recommendedName>
        <fullName evidence="1">Chaperone protein DnaK</fullName>
    </recommendedName>
    <alternativeName>
        <fullName evidence="1">HSP70</fullName>
    </alternativeName>
    <alternativeName>
        <fullName evidence="1">Heat shock 70 kDa protein</fullName>
    </alternativeName>
    <alternativeName>
        <fullName evidence="1">Heat shock protein 70</fullName>
    </alternativeName>
</protein>